<reference key="1">
    <citation type="journal article" date="2005" name="Science">
        <title>Life at depth: Photobacterium profundum genome sequence and expression analysis.</title>
        <authorList>
            <person name="Vezzi A."/>
            <person name="Campanaro S."/>
            <person name="D'Angelo M."/>
            <person name="Simonato F."/>
            <person name="Vitulo N."/>
            <person name="Lauro F.M."/>
            <person name="Cestaro A."/>
            <person name="Malacrida G."/>
            <person name="Simionati B."/>
            <person name="Cannata N."/>
            <person name="Romualdi C."/>
            <person name="Bartlett D.H."/>
            <person name="Valle G."/>
        </authorList>
    </citation>
    <scope>NUCLEOTIDE SEQUENCE [LARGE SCALE GENOMIC DNA]</scope>
    <source>
        <strain>ATCC BAA-1253 / SS9</strain>
    </source>
</reference>
<organism>
    <name type="scientific">Photobacterium profundum (strain SS9)</name>
    <dbReference type="NCBI Taxonomy" id="298386"/>
    <lineage>
        <taxon>Bacteria</taxon>
        <taxon>Pseudomonadati</taxon>
        <taxon>Pseudomonadota</taxon>
        <taxon>Gammaproteobacteria</taxon>
        <taxon>Vibrionales</taxon>
        <taxon>Vibrionaceae</taxon>
        <taxon>Photobacterium</taxon>
    </lineage>
</organism>
<gene>
    <name evidence="1" type="primary">nfo</name>
    <name type="ordered locus">PBPRA0557</name>
</gene>
<proteinExistence type="inferred from homology"/>
<name>END4_PHOPR</name>
<keyword id="KW-0227">DNA damage</keyword>
<keyword id="KW-0234">DNA repair</keyword>
<keyword id="KW-0255">Endonuclease</keyword>
<keyword id="KW-0378">Hydrolase</keyword>
<keyword id="KW-0479">Metal-binding</keyword>
<keyword id="KW-0540">Nuclease</keyword>
<keyword id="KW-1185">Reference proteome</keyword>
<keyword id="KW-0862">Zinc</keyword>
<evidence type="ECO:0000255" key="1">
    <source>
        <dbReference type="HAMAP-Rule" id="MF_00152"/>
    </source>
</evidence>
<accession>Q6LUP5</accession>
<comment type="function">
    <text evidence="1">Endonuclease IV plays a role in DNA repair. It cleaves phosphodiester bonds at apurinic or apyrimidinic (AP) sites, generating a 3'-hydroxyl group and a 5'-terminal sugar phosphate.</text>
</comment>
<comment type="catalytic activity">
    <reaction evidence="1">
        <text>Endonucleolytic cleavage to 5'-phosphooligonucleotide end-products.</text>
        <dbReference type="EC" id="3.1.21.2"/>
    </reaction>
</comment>
<comment type="cofactor">
    <cofactor evidence="1">
        <name>Zn(2+)</name>
        <dbReference type="ChEBI" id="CHEBI:29105"/>
    </cofactor>
    <text evidence="1">Binds 3 Zn(2+) ions.</text>
</comment>
<comment type="similarity">
    <text evidence="1">Belongs to the AP endonuclease 2 family.</text>
</comment>
<sequence>MVRMFLQLVGCLMHRKMQPKLVLTPLHYITKNQRQWVAKPLEQDVITAFKARCQQYGFKSEAILPHDSYLINLGNPETEKLEKSRAAFIDEMQRCNQLGLTLLNFHPGSHLKKINESDCLRLIAESINMAHQEVPEVVAVIENTAGQGSNVGWRFEHLAEIIDQIEDKSRVGVCIDTCHTFAAGYDLRSEAATEVTFSEFDQVVGMSFLRGMHLNDSKGKLGSHLDRHHSLGEGEIGWDCFRYLMQASGFDNIPLVLETINPDIWQQEIMMLRSFVASE</sequence>
<dbReference type="EC" id="3.1.21.2" evidence="1"/>
<dbReference type="EMBL" id="CR378664">
    <property type="protein sequence ID" value="CAG18980.1"/>
    <property type="molecule type" value="Genomic_DNA"/>
</dbReference>
<dbReference type="SMR" id="Q6LUP5"/>
<dbReference type="STRING" id="298386.PBPRA0557"/>
<dbReference type="KEGG" id="ppr:PBPRA0557"/>
<dbReference type="eggNOG" id="COG0648">
    <property type="taxonomic scope" value="Bacteria"/>
</dbReference>
<dbReference type="HOGENOM" id="CLU_025885_0_4_6"/>
<dbReference type="Proteomes" id="UP000000593">
    <property type="component" value="Chromosome 1"/>
</dbReference>
<dbReference type="GO" id="GO:0008833">
    <property type="term" value="F:deoxyribonuclease IV (phage-T4-induced) activity"/>
    <property type="evidence" value="ECO:0007669"/>
    <property type="project" value="UniProtKB-UniRule"/>
</dbReference>
<dbReference type="GO" id="GO:0003677">
    <property type="term" value="F:DNA binding"/>
    <property type="evidence" value="ECO:0007669"/>
    <property type="project" value="InterPro"/>
</dbReference>
<dbReference type="GO" id="GO:0003906">
    <property type="term" value="F:DNA-(apurinic or apyrimidinic site) endonuclease activity"/>
    <property type="evidence" value="ECO:0007669"/>
    <property type="project" value="TreeGrafter"/>
</dbReference>
<dbReference type="GO" id="GO:0008081">
    <property type="term" value="F:phosphoric diester hydrolase activity"/>
    <property type="evidence" value="ECO:0007669"/>
    <property type="project" value="TreeGrafter"/>
</dbReference>
<dbReference type="GO" id="GO:0008270">
    <property type="term" value="F:zinc ion binding"/>
    <property type="evidence" value="ECO:0007669"/>
    <property type="project" value="UniProtKB-UniRule"/>
</dbReference>
<dbReference type="GO" id="GO:0006284">
    <property type="term" value="P:base-excision repair"/>
    <property type="evidence" value="ECO:0007669"/>
    <property type="project" value="TreeGrafter"/>
</dbReference>
<dbReference type="CDD" id="cd00019">
    <property type="entry name" value="AP2Ec"/>
    <property type="match status" value="1"/>
</dbReference>
<dbReference type="FunFam" id="3.20.20.150:FF:000001">
    <property type="entry name" value="Probable endonuclease 4"/>
    <property type="match status" value="1"/>
</dbReference>
<dbReference type="Gene3D" id="3.20.20.150">
    <property type="entry name" value="Divalent-metal-dependent TIM barrel enzymes"/>
    <property type="match status" value="1"/>
</dbReference>
<dbReference type="HAMAP" id="MF_00152">
    <property type="entry name" value="Nfo"/>
    <property type="match status" value="1"/>
</dbReference>
<dbReference type="InterPro" id="IPR001719">
    <property type="entry name" value="AP_endonuc_2"/>
</dbReference>
<dbReference type="InterPro" id="IPR018246">
    <property type="entry name" value="AP_endonuc_F2_Zn_BS"/>
</dbReference>
<dbReference type="InterPro" id="IPR036237">
    <property type="entry name" value="Xyl_isomerase-like_sf"/>
</dbReference>
<dbReference type="InterPro" id="IPR013022">
    <property type="entry name" value="Xyl_isomerase-like_TIM-brl"/>
</dbReference>
<dbReference type="NCBIfam" id="TIGR00587">
    <property type="entry name" value="nfo"/>
    <property type="match status" value="1"/>
</dbReference>
<dbReference type="NCBIfam" id="NF002199">
    <property type="entry name" value="PRK01060.1-4"/>
    <property type="match status" value="1"/>
</dbReference>
<dbReference type="PANTHER" id="PTHR21445:SF0">
    <property type="entry name" value="APURINIC-APYRIMIDINIC ENDONUCLEASE"/>
    <property type="match status" value="1"/>
</dbReference>
<dbReference type="PANTHER" id="PTHR21445">
    <property type="entry name" value="ENDONUCLEASE IV ENDODEOXYRIBONUCLEASE IV"/>
    <property type="match status" value="1"/>
</dbReference>
<dbReference type="Pfam" id="PF01261">
    <property type="entry name" value="AP_endonuc_2"/>
    <property type="match status" value="1"/>
</dbReference>
<dbReference type="SMART" id="SM00518">
    <property type="entry name" value="AP2Ec"/>
    <property type="match status" value="1"/>
</dbReference>
<dbReference type="SUPFAM" id="SSF51658">
    <property type="entry name" value="Xylose isomerase-like"/>
    <property type="match status" value="1"/>
</dbReference>
<dbReference type="PROSITE" id="PS00729">
    <property type="entry name" value="AP_NUCLEASE_F2_1"/>
    <property type="match status" value="1"/>
</dbReference>
<dbReference type="PROSITE" id="PS00730">
    <property type="entry name" value="AP_NUCLEASE_F2_2"/>
    <property type="match status" value="1"/>
</dbReference>
<dbReference type="PROSITE" id="PS00731">
    <property type="entry name" value="AP_NUCLEASE_F2_3"/>
    <property type="match status" value="1"/>
</dbReference>
<dbReference type="PROSITE" id="PS51432">
    <property type="entry name" value="AP_NUCLEASE_F2_4"/>
    <property type="match status" value="1"/>
</dbReference>
<protein>
    <recommendedName>
        <fullName evidence="1">Probable endonuclease 4</fullName>
        <ecNumber evidence="1">3.1.21.2</ecNumber>
    </recommendedName>
    <alternativeName>
        <fullName evidence="1">Endodeoxyribonuclease IV</fullName>
    </alternativeName>
    <alternativeName>
        <fullName evidence="1">Endonuclease IV</fullName>
    </alternativeName>
</protein>
<feature type="chain" id="PRO_0000190865" description="Probable endonuclease 4">
    <location>
        <begin position="1"/>
        <end position="279"/>
    </location>
</feature>
<feature type="binding site" evidence="1">
    <location>
        <position position="66"/>
    </location>
    <ligand>
        <name>Zn(2+)</name>
        <dbReference type="ChEBI" id="CHEBI:29105"/>
        <label>1</label>
    </ligand>
</feature>
<feature type="binding site" evidence="1">
    <location>
        <position position="106"/>
    </location>
    <ligand>
        <name>Zn(2+)</name>
        <dbReference type="ChEBI" id="CHEBI:29105"/>
        <label>1</label>
    </ligand>
</feature>
<feature type="binding site" evidence="1">
    <location>
        <position position="142"/>
    </location>
    <ligand>
        <name>Zn(2+)</name>
        <dbReference type="ChEBI" id="CHEBI:29105"/>
        <label>1</label>
    </ligand>
</feature>
<feature type="binding site" evidence="1">
    <location>
        <position position="142"/>
    </location>
    <ligand>
        <name>Zn(2+)</name>
        <dbReference type="ChEBI" id="CHEBI:29105"/>
        <label>2</label>
    </ligand>
</feature>
<feature type="binding site" evidence="1">
    <location>
        <position position="176"/>
    </location>
    <ligand>
        <name>Zn(2+)</name>
        <dbReference type="ChEBI" id="CHEBI:29105"/>
        <label>2</label>
    </ligand>
</feature>
<feature type="binding site" evidence="1">
    <location>
        <position position="179"/>
    </location>
    <ligand>
        <name>Zn(2+)</name>
        <dbReference type="ChEBI" id="CHEBI:29105"/>
        <label>3</label>
    </ligand>
</feature>
<feature type="binding site" evidence="1">
    <location>
        <position position="213"/>
    </location>
    <ligand>
        <name>Zn(2+)</name>
        <dbReference type="ChEBI" id="CHEBI:29105"/>
        <label>2</label>
    </ligand>
</feature>
<feature type="binding site" evidence="1">
    <location>
        <position position="226"/>
    </location>
    <ligand>
        <name>Zn(2+)</name>
        <dbReference type="ChEBI" id="CHEBI:29105"/>
        <label>3</label>
    </ligand>
</feature>
<feature type="binding site" evidence="1">
    <location>
        <position position="228"/>
    </location>
    <ligand>
        <name>Zn(2+)</name>
        <dbReference type="ChEBI" id="CHEBI:29105"/>
        <label>3</label>
    </ligand>
</feature>
<feature type="binding site" evidence="1">
    <location>
        <position position="258"/>
    </location>
    <ligand>
        <name>Zn(2+)</name>
        <dbReference type="ChEBI" id="CHEBI:29105"/>
        <label>2</label>
    </ligand>
</feature>